<gene>
    <name evidence="1" type="primary">ruvA</name>
    <name type="ordered locus">RC1_1806</name>
</gene>
<reference key="1">
    <citation type="submission" date="2007-03" db="EMBL/GenBank/DDBJ databases">
        <title>Genome sequence of Rhodospirillum centenum.</title>
        <authorList>
            <person name="Touchman J.W."/>
            <person name="Bauer C."/>
            <person name="Blankenship R.E."/>
        </authorList>
    </citation>
    <scope>NUCLEOTIDE SEQUENCE [LARGE SCALE GENOMIC DNA]</scope>
    <source>
        <strain>ATCC 51521 / SW</strain>
    </source>
</reference>
<keyword id="KW-0963">Cytoplasm</keyword>
<keyword id="KW-0227">DNA damage</keyword>
<keyword id="KW-0233">DNA recombination</keyword>
<keyword id="KW-0234">DNA repair</keyword>
<keyword id="KW-0238">DNA-binding</keyword>
<keyword id="KW-1185">Reference proteome</keyword>
<proteinExistence type="inferred from homology"/>
<organism>
    <name type="scientific">Rhodospirillum centenum (strain ATCC 51521 / SW)</name>
    <dbReference type="NCBI Taxonomy" id="414684"/>
    <lineage>
        <taxon>Bacteria</taxon>
        <taxon>Pseudomonadati</taxon>
        <taxon>Pseudomonadota</taxon>
        <taxon>Alphaproteobacteria</taxon>
        <taxon>Rhodospirillales</taxon>
        <taxon>Rhodospirillaceae</taxon>
        <taxon>Rhodospirillum</taxon>
    </lineage>
</organism>
<protein>
    <recommendedName>
        <fullName evidence="1">Holliday junction branch migration complex subunit RuvA</fullName>
    </recommendedName>
</protein>
<dbReference type="EMBL" id="CP000613">
    <property type="protein sequence ID" value="ACI99203.1"/>
    <property type="molecule type" value="Genomic_DNA"/>
</dbReference>
<dbReference type="RefSeq" id="WP_012566988.1">
    <property type="nucleotide sequence ID" value="NC_011420.2"/>
</dbReference>
<dbReference type="SMR" id="B6ITI5"/>
<dbReference type="STRING" id="414684.RC1_1806"/>
<dbReference type="KEGG" id="rce:RC1_1806"/>
<dbReference type="eggNOG" id="COG0632">
    <property type="taxonomic scope" value="Bacteria"/>
</dbReference>
<dbReference type="HOGENOM" id="CLU_087936_3_0_5"/>
<dbReference type="OrthoDB" id="5293449at2"/>
<dbReference type="Proteomes" id="UP000001591">
    <property type="component" value="Chromosome"/>
</dbReference>
<dbReference type="GO" id="GO:0005737">
    <property type="term" value="C:cytoplasm"/>
    <property type="evidence" value="ECO:0007669"/>
    <property type="project" value="UniProtKB-SubCell"/>
</dbReference>
<dbReference type="GO" id="GO:0009379">
    <property type="term" value="C:Holliday junction helicase complex"/>
    <property type="evidence" value="ECO:0007669"/>
    <property type="project" value="InterPro"/>
</dbReference>
<dbReference type="GO" id="GO:0048476">
    <property type="term" value="C:Holliday junction resolvase complex"/>
    <property type="evidence" value="ECO:0007669"/>
    <property type="project" value="UniProtKB-UniRule"/>
</dbReference>
<dbReference type="GO" id="GO:0005524">
    <property type="term" value="F:ATP binding"/>
    <property type="evidence" value="ECO:0007669"/>
    <property type="project" value="InterPro"/>
</dbReference>
<dbReference type="GO" id="GO:0000400">
    <property type="term" value="F:four-way junction DNA binding"/>
    <property type="evidence" value="ECO:0007669"/>
    <property type="project" value="UniProtKB-UniRule"/>
</dbReference>
<dbReference type="GO" id="GO:0009378">
    <property type="term" value="F:four-way junction helicase activity"/>
    <property type="evidence" value="ECO:0007669"/>
    <property type="project" value="InterPro"/>
</dbReference>
<dbReference type="GO" id="GO:0006310">
    <property type="term" value="P:DNA recombination"/>
    <property type="evidence" value="ECO:0007669"/>
    <property type="project" value="UniProtKB-UniRule"/>
</dbReference>
<dbReference type="GO" id="GO:0006281">
    <property type="term" value="P:DNA repair"/>
    <property type="evidence" value="ECO:0007669"/>
    <property type="project" value="UniProtKB-UniRule"/>
</dbReference>
<dbReference type="CDD" id="cd14332">
    <property type="entry name" value="UBA_RuvA_C"/>
    <property type="match status" value="1"/>
</dbReference>
<dbReference type="Gene3D" id="1.10.150.20">
    <property type="entry name" value="5' to 3' exonuclease, C-terminal subdomain"/>
    <property type="match status" value="1"/>
</dbReference>
<dbReference type="Gene3D" id="1.10.8.10">
    <property type="entry name" value="DNA helicase RuvA subunit, C-terminal domain"/>
    <property type="match status" value="1"/>
</dbReference>
<dbReference type="Gene3D" id="2.40.50.140">
    <property type="entry name" value="Nucleic acid-binding proteins"/>
    <property type="match status" value="1"/>
</dbReference>
<dbReference type="HAMAP" id="MF_00031">
    <property type="entry name" value="DNA_HJ_migration_RuvA"/>
    <property type="match status" value="1"/>
</dbReference>
<dbReference type="InterPro" id="IPR013849">
    <property type="entry name" value="DNA_helicase_Holl-junc_RuvA_I"/>
</dbReference>
<dbReference type="InterPro" id="IPR003583">
    <property type="entry name" value="Hlx-hairpin-Hlx_DNA-bd_motif"/>
</dbReference>
<dbReference type="InterPro" id="IPR012340">
    <property type="entry name" value="NA-bd_OB-fold"/>
</dbReference>
<dbReference type="InterPro" id="IPR000085">
    <property type="entry name" value="RuvA"/>
</dbReference>
<dbReference type="InterPro" id="IPR010994">
    <property type="entry name" value="RuvA_2-like"/>
</dbReference>
<dbReference type="InterPro" id="IPR011114">
    <property type="entry name" value="RuvA_C"/>
</dbReference>
<dbReference type="InterPro" id="IPR036267">
    <property type="entry name" value="RuvA_C_sf"/>
</dbReference>
<dbReference type="NCBIfam" id="TIGR00084">
    <property type="entry name" value="ruvA"/>
    <property type="match status" value="1"/>
</dbReference>
<dbReference type="Pfam" id="PF14520">
    <property type="entry name" value="HHH_5"/>
    <property type="match status" value="1"/>
</dbReference>
<dbReference type="Pfam" id="PF07499">
    <property type="entry name" value="RuvA_C"/>
    <property type="match status" value="1"/>
</dbReference>
<dbReference type="Pfam" id="PF01330">
    <property type="entry name" value="RuvA_N"/>
    <property type="match status" value="1"/>
</dbReference>
<dbReference type="SMART" id="SM00278">
    <property type="entry name" value="HhH1"/>
    <property type="match status" value="2"/>
</dbReference>
<dbReference type="SUPFAM" id="SSF46929">
    <property type="entry name" value="DNA helicase RuvA subunit, C-terminal domain"/>
    <property type="match status" value="1"/>
</dbReference>
<dbReference type="SUPFAM" id="SSF50249">
    <property type="entry name" value="Nucleic acid-binding proteins"/>
    <property type="match status" value="1"/>
</dbReference>
<dbReference type="SUPFAM" id="SSF47781">
    <property type="entry name" value="RuvA domain 2-like"/>
    <property type="match status" value="1"/>
</dbReference>
<comment type="function">
    <text evidence="1">The RuvA-RuvB-RuvC complex processes Holliday junction (HJ) DNA during genetic recombination and DNA repair, while the RuvA-RuvB complex plays an important role in the rescue of blocked DNA replication forks via replication fork reversal (RFR). RuvA specifically binds to HJ cruciform DNA, conferring on it an open structure. The RuvB hexamer acts as an ATP-dependent pump, pulling dsDNA into and through the RuvAB complex. HJ branch migration allows RuvC to scan DNA until it finds its consensus sequence, where it cleaves and resolves the cruciform DNA.</text>
</comment>
<comment type="subunit">
    <text evidence="1">Homotetramer. Forms an RuvA(8)-RuvB(12)-Holliday junction (HJ) complex. HJ DNA is sandwiched between 2 RuvA tetramers; dsDNA enters through RuvA and exits via RuvB. An RuvB hexamer assembles on each DNA strand where it exits the tetramer. Each RuvB hexamer is contacted by two RuvA subunits (via domain III) on 2 adjacent RuvB subunits; this complex drives branch migration. In the full resolvosome a probable DNA-RuvA(4)-RuvB(12)-RuvC(2) complex forms which resolves the HJ.</text>
</comment>
<comment type="subcellular location">
    <subcellularLocation>
        <location evidence="1">Cytoplasm</location>
    </subcellularLocation>
</comment>
<comment type="domain">
    <text evidence="1">Has three domains with a flexible linker between the domains II and III and assumes an 'L' shape. Domain III is highly mobile and contacts RuvB.</text>
</comment>
<comment type="similarity">
    <text evidence="1">Belongs to the RuvA family.</text>
</comment>
<feature type="chain" id="PRO_1000090359" description="Holliday junction branch migration complex subunit RuvA">
    <location>
        <begin position="1"/>
        <end position="206"/>
    </location>
</feature>
<feature type="region of interest" description="Domain I" evidence="1">
    <location>
        <begin position="1"/>
        <end position="64"/>
    </location>
</feature>
<feature type="region of interest" description="Domain II" evidence="1">
    <location>
        <begin position="65"/>
        <end position="143"/>
    </location>
</feature>
<feature type="region of interest" description="Flexible linker" evidence="1">
    <location>
        <begin position="144"/>
        <end position="154"/>
    </location>
</feature>
<feature type="region of interest" description="Domain III" evidence="1">
    <location>
        <begin position="154"/>
        <end position="206"/>
    </location>
</feature>
<name>RUVA_RHOCS</name>
<accession>B6ITI5</accession>
<evidence type="ECO:0000255" key="1">
    <source>
        <dbReference type="HAMAP-Rule" id="MF_00031"/>
    </source>
</evidence>
<sequence length="206" mass="21064">MIAKLTGLLDSTGLDWAIVDVGGVGYLVSASARTLRRLAAPGEAVSLLTEMWVSEDNIQLFGFADTEERDWFRLLTTVQGVGARVALNLLSALSPAELTNSIAAQDRTALCQADGVGPKLAARILNELKEKVASFGAPAPAAATAGKGGAAPAGPAGAVADAVSALVNLGYRRVEAFTAVNAVAQRLGPEAGVSDLIRAGLKELSP</sequence>